<accession>Q8DNI9</accession>
<accession>Q9EUQ6</accession>
<protein>
    <recommendedName>
        <fullName evidence="1">Segregation and condensation protein B</fullName>
    </recommendedName>
</protein>
<name>SCPB_STRR6</name>
<proteinExistence type="evidence at protein level"/>
<gene>
    <name evidence="1" type="primary">scpB</name>
    <name type="ordered locus">spr1690</name>
</gene>
<organism>
    <name type="scientific">Streptococcus pneumoniae (strain ATCC BAA-255 / R6)</name>
    <dbReference type="NCBI Taxonomy" id="171101"/>
    <lineage>
        <taxon>Bacteria</taxon>
        <taxon>Bacillati</taxon>
        <taxon>Bacillota</taxon>
        <taxon>Bacilli</taxon>
        <taxon>Lactobacillales</taxon>
        <taxon>Streptococcaceae</taxon>
        <taxon>Streptococcus</taxon>
    </lineage>
</organism>
<reference key="1">
    <citation type="journal article" date="2002" name="J. Mol. Microbiol. Biotechnol.">
        <title>A XerD recombinase with unusual active site motifs in Streptococcus pneumoniae.</title>
        <authorList>
            <person name="Reichmann P."/>
            <person name="Hakenbeck R."/>
        </authorList>
    </citation>
    <scope>NUCLEOTIDE SEQUENCE [GENOMIC DNA]</scope>
</reference>
<reference key="2">
    <citation type="journal article" date="2001" name="J. Bacteriol.">
        <title>Genome of the bacterium Streptococcus pneumoniae strain R6.</title>
        <authorList>
            <person name="Hoskins J."/>
            <person name="Alborn W.E. Jr."/>
            <person name="Arnold J."/>
            <person name="Blaszczak L.C."/>
            <person name="Burgett S."/>
            <person name="DeHoff B.S."/>
            <person name="Estrem S.T."/>
            <person name="Fritz L."/>
            <person name="Fu D.-J."/>
            <person name="Fuller W."/>
            <person name="Geringer C."/>
            <person name="Gilmour R."/>
            <person name="Glass J.S."/>
            <person name="Khoja H."/>
            <person name="Kraft A.R."/>
            <person name="Lagace R.E."/>
            <person name="LeBlanc D.J."/>
            <person name="Lee L.N."/>
            <person name="Lefkowitz E.J."/>
            <person name="Lu J."/>
            <person name="Matsushima P."/>
            <person name="McAhren S.M."/>
            <person name="McHenney M."/>
            <person name="McLeaster K."/>
            <person name="Mundy C.W."/>
            <person name="Nicas T.I."/>
            <person name="Norris F.H."/>
            <person name="O'Gara M."/>
            <person name="Peery R.B."/>
            <person name="Robertson G.T."/>
            <person name="Rockey P."/>
            <person name="Sun P.-M."/>
            <person name="Winkler M.E."/>
            <person name="Yang Y."/>
            <person name="Young-Bellido M."/>
            <person name="Zhao G."/>
            <person name="Zook C.A."/>
            <person name="Baltz R.H."/>
            <person name="Jaskunas S.R."/>
            <person name="Rosteck P.R. Jr."/>
            <person name="Skatrud P.L."/>
            <person name="Glass J.I."/>
        </authorList>
    </citation>
    <scope>NUCLEOTIDE SEQUENCE [LARGE SCALE GENOMIC DNA]</scope>
    <source>
        <strain>ATCC BAA-255 / R6</strain>
    </source>
</reference>
<feature type="chain" id="PRO_0000211160" description="Segregation and condensation protein B">
    <location>
        <begin position="1"/>
        <end position="189"/>
    </location>
</feature>
<evidence type="ECO:0000255" key="1">
    <source>
        <dbReference type="HAMAP-Rule" id="MF_01804"/>
    </source>
</evidence>
<evidence type="ECO:0000305" key="2"/>
<comment type="function">
    <text evidence="1">Participates in chromosomal partition during cell division. May act via the formation of a condensin-like complex containing Smc and ScpA that pull DNA away from mid-cell into both cell halves.</text>
</comment>
<comment type="subunit">
    <text evidence="1">Homodimer. Homodimerization may be required to stabilize the binding of ScpA to the Smc head domains. Component of a cohesin-like complex composed of ScpA, ScpB and the Smc homodimer, in which ScpA and ScpB bind to the head domain of Smc. The presence of the three proteins is required for the association of the complex with DNA.</text>
</comment>
<comment type="interaction">
    <interactant intactId="EBI-16033389">
        <id>Q8DNI9</id>
    </interactant>
    <interactant intactId="EBI-16033375">
        <id>Q9EUQ7</id>
        <label>scpA</label>
    </interactant>
    <organismsDiffer>false</organismsDiffer>
    <experiments>4</experiments>
</comment>
<comment type="subcellular location">
    <subcellularLocation>
        <location evidence="1">Cytoplasm</location>
    </subcellularLocation>
    <text evidence="1">Associated with two foci at the outer edges of the nucleoid region in young cells, and at four foci within both cell halves in older cells.</text>
</comment>
<comment type="similarity">
    <text evidence="1">Belongs to the ScpB family.</text>
</comment>
<comment type="sequence caution" evidence="2">
    <conflict type="frameshift">
        <sequence resource="EMBL-CDS" id="CAC19450"/>
    </conflict>
</comment>
<keyword id="KW-0131">Cell cycle</keyword>
<keyword id="KW-0132">Cell division</keyword>
<keyword id="KW-0159">Chromosome partition</keyword>
<keyword id="KW-0963">Cytoplasm</keyword>
<keyword id="KW-1185">Reference proteome</keyword>
<dbReference type="EMBL" id="AJ277766">
    <property type="protein sequence ID" value="CAC19450.1"/>
    <property type="status" value="ALT_FRAME"/>
    <property type="molecule type" value="Genomic_DNA"/>
</dbReference>
<dbReference type="EMBL" id="AE007317">
    <property type="protein sequence ID" value="AAL00493.1"/>
    <property type="molecule type" value="Genomic_DNA"/>
</dbReference>
<dbReference type="PIR" id="H98082">
    <property type="entry name" value="H98082"/>
</dbReference>
<dbReference type="RefSeq" id="NP_359282.1">
    <property type="nucleotide sequence ID" value="NC_003098.1"/>
</dbReference>
<dbReference type="RefSeq" id="WP_000105310.1">
    <property type="nucleotide sequence ID" value="NC_003098.1"/>
</dbReference>
<dbReference type="SMR" id="Q8DNI9"/>
<dbReference type="DIP" id="DIP-60234N"/>
<dbReference type="IntAct" id="Q8DNI9">
    <property type="interactions" value="1"/>
</dbReference>
<dbReference type="STRING" id="171101.spr1690"/>
<dbReference type="GeneID" id="45219111"/>
<dbReference type="KEGG" id="spr:spr1690"/>
<dbReference type="PATRIC" id="fig|171101.6.peg.1828"/>
<dbReference type="eggNOG" id="COG1386">
    <property type="taxonomic scope" value="Bacteria"/>
</dbReference>
<dbReference type="HOGENOM" id="CLU_045647_5_3_9"/>
<dbReference type="Proteomes" id="UP000000586">
    <property type="component" value="Chromosome"/>
</dbReference>
<dbReference type="GO" id="GO:0005737">
    <property type="term" value="C:cytoplasm"/>
    <property type="evidence" value="ECO:0007669"/>
    <property type="project" value="UniProtKB-SubCell"/>
</dbReference>
<dbReference type="GO" id="GO:0051301">
    <property type="term" value="P:cell division"/>
    <property type="evidence" value="ECO:0007669"/>
    <property type="project" value="UniProtKB-KW"/>
</dbReference>
<dbReference type="GO" id="GO:0051304">
    <property type="term" value="P:chromosome separation"/>
    <property type="evidence" value="ECO:0007669"/>
    <property type="project" value="InterPro"/>
</dbReference>
<dbReference type="GO" id="GO:0006260">
    <property type="term" value="P:DNA replication"/>
    <property type="evidence" value="ECO:0007669"/>
    <property type="project" value="UniProtKB-UniRule"/>
</dbReference>
<dbReference type="FunFam" id="1.10.10.10:FF:000507">
    <property type="entry name" value="Segregation and condensation protein B"/>
    <property type="match status" value="1"/>
</dbReference>
<dbReference type="FunFam" id="1.10.10.10:FF:000508">
    <property type="entry name" value="Segregation and condensation protein B"/>
    <property type="match status" value="1"/>
</dbReference>
<dbReference type="Gene3D" id="1.10.10.10">
    <property type="entry name" value="Winged helix-like DNA-binding domain superfamily/Winged helix DNA-binding domain"/>
    <property type="match status" value="2"/>
</dbReference>
<dbReference type="HAMAP" id="MF_01804">
    <property type="entry name" value="ScpB"/>
    <property type="match status" value="1"/>
</dbReference>
<dbReference type="InterPro" id="IPR005234">
    <property type="entry name" value="ScpB_csome_segregation"/>
</dbReference>
<dbReference type="InterPro" id="IPR036388">
    <property type="entry name" value="WH-like_DNA-bd_sf"/>
</dbReference>
<dbReference type="InterPro" id="IPR036390">
    <property type="entry name" value="WH_DNA-bd_sf"/>
</dbReference>
<dbReference type="NCBIfam" id="TIGR00281">
    <property type="entry name" value="SMC-Scp complex subunit ScpB"/>
    <property type="match status" value="1"/>
</dbReference>
<dbReference type="PANTHER" id="PTHR34298">
    <property type="entry name" value="SEGREGATION AND CONDENSATION PROTEIN B"/>
    <property type="match status" value="1"/>
</dbReference>
<dbReference type="PANTHER" id="PTHR34298:SF2">
    <property type="entry name" value="SEGREGATION AND CONDENSATION PROTEIN B"/>
    <property type="match status" value="1"/>
</dbReference>
<dbReference type="Pfam" id="PF04079">
    <property type="entry name" value="SMC_ScpB"/>
    <property type="match status" value="1"/>
</dbReference>
<dbReference type="PIRSF" id="PIRSF019345">
    <property type="entry name" value="ScpB"/>
    <property type="match status" value="1"/>
</dbReference>
<dbReference type="SUPFAM" id="SSF46785">
    <property type="entry name" value="Winged helix' DNA-binding domain"/>
    <property type="match status" value="2"/>
</dbReference>
<sequence>MSTLAKIEALLFVAGEDGIRVRQLAELLSLPPTGIQQSLGKLAQKYEKDPDSSLALIETSGAYRLVTKPQFAEILKEYSKAPINQSLSRAALETLSIIAYKQPITRIEIDAIRGVNSSGALAKLQAFDLIKEDGKKEVLGRPNLYVTTDYFLDYMGINHLEELPVIDELEIQAQESQLFGERIEEDENQ</sequence>